<feature type="chain" id="PRO_0000160539" description="ATP-dependent protease ATPase subunit HslU">
    <location>
        <begin position="1"/>
        <end position="450"/>
    </location>
</feature>
<feature type="binding site" evidence="1">
    <location>
        <position position="29"/>
    </location>
    <ligand>
        <name>ATP</name>
        <dbReference type="ChEBI" id="CHEBI:30616"/>
    </ligand>
</feature>
<feature type="binding site" evidence="1">
    <location>
        <begin position="71"/>
        <end position="76"/>
    </location>
    <ligand>
        <name>ATP</name>
        <dbReference type="ChEBI" id="CHEBI:30616"/>
    </ligand>
</feature>
<feature type="binding site" evidence="1">
    <location>
        <position position="261"/>
    </location>
    <ligand>
        <name>ATP</name>
        <dbReference type="ChEBI" id="CHEBI:30616"/>
    </ligand>
</feature>
<feature type="binding site" evidence="1">
    <location>
        <position position="328"/>
    </location>
    <ligand>
        <name>ATP</name>
        <dbReference type="ChEBI" id="CHEBI:30616"/>
    </ligand>
</feature>
<feature type="binding site" evidence="1">
    <location>
        <position position="400"/>
    </location>
    <ligand>
        <name>ATP</name>
        <dbReference type="ChEBI" id="CHEBI:30616"/>
    </ligand>
</feature>
<sequence>MKSTETTYKKDNMGLTPSQIVNELNRFIVGQDKAKKAVAIALRNRYRRKRVEGNLRNEIVPKNILMIGSTGVGKTEIARRLAKLTNSPFYKIEATKFTEVGYVGRDVESIIRDLVEIAVNTEKALAKIAVDINAREKAIERILDSLVGKTSSSETREKFKAKVLNGELDDTEIEISVADTTPVGGGGFEIPCIPGASMGVLNLGDMIGRALGNSKTKTKKMLIKDAMTVIIPEESEKLIDQEKIIQKAINLAENDGIVFIDEIDKIASTSNAGAKNAEISREGVQRDLLPLIEGTTVNTKYGPVKTDHILFIASGAFHIAKPSDLLPELQGRLPIRVELNLLTKDDMIKILLEPETSLIKQYSALIGTEEVHLEFTDAAIEKIADYAITVNLEVEDIGARRLHTILENLLEDISFEASEMKVKKIIIDDKFVENQLSKIITNLDLAKFVL</sequence>
<comment type="function">
    <text evidence="1">ATPase subunit of a proteasome-like degradation complex; this subunit has chaperone activity. The binding of ATP and its subsequent hydrolysis by HslU are essential for unfolding of protein substrates subsequently hydrolyzed by HslV. HslU recognizes the N-terminal part of its protein substrates and unfolds these before they are guided to HslV for hydrolysis.</text>
</comment>
<comment type="subunit">
    <text evidence="1">A double ring-shaped homohexamer of HslV is capped on each side by a ring-shaped HslU homohexamer. The assembly of the HslU/HslV complex is dependent on binding of ATP.</text>
</comment>
<comment type="subcellular location">
    <subcellularLocation>
        <location evidence="1">Cytoplasm</location>
    </subcellularLocation>
</comment>
<comment type="similarity">
    <text evidence="1">Belongs to the ClpX chaperone family. HslU subfamily.</text>
</comment>
<protein>
    <recommendedName>
        <fullName evidence="1">ATP-dependent protease ATPase subunit HslU</fullName>
    </recommendedName>
    <alternativeName>
        <fullName evidence="1">Unfoldase HslU</fullName>
    </alternativeName>
</protein>
<dbReference type="EMBL" id="AJ235271">
    <property type="protein sequence ID" value="CAA14780.1"/>
    <property type="molecule type" value="Genomic_DNA"/>
</dbReference>
<dbReference type="PIR" id="B71688">
    <property type="entry name" value="B71688"/>
</dbReference>
<dbReference type="RefSeq" id="NP_220703.1">
    <property type="nucleotide sequence ID" value="NC_000963.1"/>
</dbReference>
<dbReference type="RefSeq" id="WP_004599404.1">
    <property type="nucleotide sequence ID" value="NC_000963.1"/>
</dbReference>
<dbReference type="SMR" id="Q9ZDK8"/>
<dbReference type="STRING" id="272947.gene:17555400"/>
<dbReference type="EnsemblBacteria" id="CAA14780">
    <property type="protein sequence ID" value="CAA14780"/>
    <property type="gene ID" value="CAA14780"/>
</dbReference>
<dbReference type="GeneID" id="57569446"/>
<dbReference type="KEGG" id="rpr:RP320"/>
<dbReference type="PATRIC" id="fig|272947.5.peg.329"/>
<dbReference type="eggNOG" id="COG1220">
    <property type="taxonomic scope" value="Bacteria"/>
</dbReference>
<dbReference type="HOGENOM" id="CLU_033123_0_0_5"/>
<dbReference type="OrthoDB" id="9804062at2"/>
<dbReference type="Proteomes" id="UP000002480">
    <property type="component" value="Chromosome"/>
</dbReference>
<dbReference type="GO" id="GO:0009376">
    <property type="term" value="C:HslUV protease complex"/>
    <property type="evidence" value="ECO:0007669"/>
    <property type="project" value="UniProtKB-UniRule"/>
</dbReference>
<dbReference type="GO" id="GO:0005524">
    <property type="term" value="F:ATP binding"/>
    <property type="evidence" value="ECO:0007669"/>
    <property type="project" value="UniProtKB-UniRule"/>
</dbReference>
<dbReference type="GO" id="GO:0016887">
    <property type="term" value="F:ATP hydrolysis activity"/>
    <property type="evidence" value="ECO:0007669"/>
    <property type="project" value="InterPro"/>
</dbReference>
<dbReference type="GO" id="GO:0003677">
    <property type="term" value="F:DNA binding"/>
    <property type="evidence" value="ECO:0007669"/>
    <property type="project" value="InterPro"/>
</dbReference>
<dbReference type="GO" id="GO:0008233">
    <property type="term" value="F:peptidase activity"/>
    <property type="evidence" value="ECO:0007669"/>
    <property type="project" value="InterPro"/>
</dbReference>
<dbReference type="GO" id="GO:0036402">
    <property type="term" value="F:proteasome-activating activity"/>
    <property type="evidence" value="ECO:0007669"/>
    <property type="project" value="UniProtKB-UniRule"/>
</dbReference>
<dbReference type="GO" id="GO:0043335">
    <property type="term" value="P:protein unfolding"/>
    <property type="evidence" value="ECO:0007669"/>
    <property type="project" value="UniProtKB-UniRule"/>
</dbReference>
<dbReference type="GO" id="GO:0051603">
    <property type="term" value="P:proteolysis involved in protein catabolic process"/>
    <property type="evidence" value="ECO:0007669"/>
    <property type="project" value="TreeGrafter"/>
</dbReference>
<dbReference type="CDD" id="cd19498">
    <property type="entry name" value="RecA-like_HslU"/>
    <property type="match status" value="1"/>
</dbReference>
<dbReference type="Gene3D" id="1.10.8.60">
    <property type="match status" value="1"/>
</dbReference>
<dbReference type="Gene3D" id="3.40.50.300">
    <property type="entry name" value="P-loop containing nucleotide triphosphate hydrolases"/>
    <property type="match status" value="2"/>
</dbReference>
<dbReference type="HAMAP" id="MF_00249">
    <property type="entry name" value="HslU"/>
    <property type="match status" value="1"/>
</dbReference>
<dbReference type="InterPro" id="IPR003593">
    <property type="entry name" value="AAA+_ATPase"/>
</dbReference>
<dbReference type="InterPro" id="IPR050052">
    <property type="entry name" value="ATP-dep_Clp_protease_ClpX"/>
</dbReference>
<dbReference type="InterPro" id="IPR003959">
    <property type="entry name" value="ATPase_AAA_core"/>
</dbReference>
<dbReference type="InterPro" id="IPR019489">
    <property type="entry name" value="Clp_ATPase_C"/>
</dbReference>
<dbReference type="InterPro" id="IPR004491">
    <property type="entry name" value="HslU"/>
</dbReference>
<dbReference type="InterPro" id="IPR001208">
    <property type="entry name" value="MCM_dom"/>
</dbReference>
<dbReference type="InterPro" id="IPR027417">
    <property type="entry name" value="P-loop_NTPase"/>
</dbReference>
<dbReference type="NCBIfam" id="TIGR00390">
    <property type="entry name" value="hslU"/>
    <property type="match status" value="1"/>
</dbReference>
<dbReference type="NCBIfam" id="NF003544">
    <property type="entry name" value="PRK05201.1"/>
    <property type="match status" value="1"/>
</dbReference>
<dbReference type="PANTHER" id="PTHR48102">
    <property type="entry name" value="ATP-DEPENDENT CLP PROTEASE ATP-BINDING SUBUNIT CLPX-LIKE, MITOCHONDRIAL-RELATED"/>
    <property type="match status" value="1"/>
</dbReference>
<dbReference type="PANTHER" id="PTHR48102:SF3">
    <property type="entry name" value="ATP-DEPENDENT PROTEASE ATPASE SUBUNIT HSLU"/>
    <property type="match status" value="1"/>
</dbReference>
<dbReference type="Pfam" id="PF07724">
    <property type="entry name" value="AAA_2"/>
    <property type="match status" value="1"/>
</dbReference>
<dbReference type="Pfam" id="PF00493">
    <property type="entry name" value="MCM"/>
    <property type="match status" value="1"/>
</dbReference>
<dbReference type="SMART" id="SM00382">
    <property type="entry name" value="AAA"/>
    <property type="match status" value="1"/>
</dbReference>
<dbReference type="SMART" id="SM01086">
    <property type="entry name" value="ClpB_D2-small"/>
    <property type="match status" value="1"/>
</dbReference>
<dbReference type="SUPFAM" id="SSF52540">
    <property type="entry name" value="P-loop containing nucleoside triphosphate hydrolases"/>
    <property type="match status" value="1"/>
</dbReference>
<keyword id="KW-0067">ATP-binding</keyword>
<keyword id="KW-0143">Chaperone</keyword>
<keyword id="KW-0963">Cytoplasm</keyword>
<keyword id="KW-0547">Nucleotide-binding</keyword>
<keyword id="KW-1185">Reference proteome</keyword>
<proteinExistence type="inferred from homology"/>
<name>HSLU_RICPR</name>
<gene>
    <name evidence="1" type="primary">hslU</name>
    <name type="ordered locus">RP320</name>
</gene>
<accession>Q9ZDK8</accession>
<evidence type="ECO:0000255" key="1">
    <source>
        <dbReference type="HAMAP-Rule" id="MF_00249"/>
    </source>
</evidence>
<reference key="1">
    <citation type="journal article" date="1998" name="Nature">
        <title>The genome sequence of Rickettsia prowazekii and the origin of mitochondria.</title>
        <authorList>
            <person name="Andersson S.G.E."/>
            <person name="Zomorodipour A."/>
            <person name="Andersson J.O."/>
            <person name="Sicheritz-Ponten T."/>
            <person name="Alsmark U.C.M."/>
            <person name="Podowski R.M."/>
            <person name="Naeslund A.K."/>
            <person name="Eriksson A.-S."/>
            <person name="Winkler H.H."/>
            <person name="Kurland C.G."/>
        </authorList>
    </citation>
    <scope>NUCLEOTIDE SEQUENCE [LARGE SCALE GENOMIC DNA]</scope>
    <source>
        <strain>Madrid E</strain>
    </source>
</reference>
<organism>
    <name type="scientific">Rickettsia prowazekii (strain Madrid E)</name>
    <dbReference type="NCBI Taxonomy" id="272947"/>
    <lineage>
        <taxon>Bacteria</taxon>
        <taxon>Pseudomonadati</taxon>
        <taxon>Pseudomonadota</taxon>
        <taxon>Alphaproteobacteria</taxon>
        <taxon>Rickettsiales</taxon>
        <taxon>Rickettsiaceae</taxon>
        <taxon>Rickettsieae</taxon>
        <taxon>Rickettsia</taxon>
        <taxon>typhus group</taxon>
    </lineage>
</organism>